<keyword id="KW-0963">Cytoplasm</keyword>
<keyword id="KW-0488">Methylation</keyword>
<keyword id="KW-0648">Protein biosynthesis</keyword>
<keyword id="KW-1185">Reference proteome</keyword>
<protein>
    <recommendedName>
        <fullName evidence="1">Peptide chain release factor 1</fullName>
        <shortName evidence="1">RF-1</shortName>
    </recommendedName>
</protein>
<name>RF1_PARD8</name>
<evidence type="ECO:0000255" key="1">
    <source>
        <dbReference type="HAMAP-Rule" id="MF_00093"/>
    </source>
</evidence>
<gene>
    <name evidence="1" type="primary">prfA</name>
    <name type="ordered locus">BDI_2102</name>
</gene>
<sequence length="369" mass="41607">MAENSLLGKLDGLVSRFEEVGTLITDPAVIADMKRFVKLNKEYRDLEKIVGARSEYVKVLNGIEEAKALLESEQDPEMREMAREELDTCNERIPALEEEIKLLLVPADPQDDKNAIVEIRGGTGGDEAALFAGDLYRMYVKYCELKGWKISVSSFSEGSSGGFKEIIFTVSGEKVYGTLKYESGVHRVQRVPATETQGRVHTSAATVAVLPEADEFDVEINEGEIKWDTFRSGGAGGQNVNKVESGVRLRYVWKNPITGVSEEILIECTETRDQPKNKERALTRLRSFIYDKEHQKYLDDIASKRKTMVSTGDRSAKIRTYNYPQGRITDHRINYTIYNLSAFMDGEIQDCLDHLIVAENAERLKESEL</sequence>
<reference key="1">
    <citation type="journal article" date="2007" name="PLoS Biol.">
        <title>Evolution of symbiotic bacteria in the distal human intestine.</title>
        <authorList>
            <person name="Xu J."/>
            <person name="Mahowald M.A."/>
            <person name="Ley R.E."/>
            <person name="Lozupone C.A."/>
            <person name="Hamady M."/>
            <person name="Martens E.C."/>
            <person name="Henrissat B."/>
            <person name="Coutinho P.M."/>
            <person name="Minx P."/>
            <person name="Latreille P."/>
            <person name="Cordum H."/>
            <person name="Van Brunt A."/>
            <person name="Kim K."/>
            <person name="Fulton R.S."/>
            <person name="Fulton L.A."/>
            <person name="Clifton S.W."/>
            <person name="Wilson R.K."/>
            <person name="Knight R.D."/>
            <person name="Gordon J.I."/>
        </authorList>
    </citation>
    <scope>NUCLEOTIDE SEQUENCE [LARGE SCALE GENOMIC DNA]</scope>
    <source>
        <strain>ATCC 8503 / DSM 20701 / CIP 104284 / JCM 5825 / NCTC 11152</strain>
    </source>
</reference>
<organism>
    <name type="scientific">Parabacteroides distasonis (strain ATCC 8503 / DSM 20701 / CIP 104284 / JCM 5825 / NCTC 11152)</name>
    <dbReference type="NCBI Taxonomy" id="435591"/>
    <lineage>
        <taxon>Bacteria</taxon>
        <taxon>Pseudomonadati</taxon>
        <taxon>Bacteroidota</taxon>
        <taxon>Bacteroidia</taxon>
        <taxon>Bacteroidales</taxon>
        <taxon>Tannerellaceae</taxon>
        <taxon>Parabacteroides</taxon>
    </lineage>
</organism>
<comment type="function">
    <text evidence="1">Peptide chain release factor 1 directs the termination of translation in response to the peptide chain termination codons UAG and UAA.</text>
</comment>
<comment type="subcellular location">
    <subcellularLocation>
        <location evidence="1">Cytoplasm</location>
    </subcellularLocation>
</comment>
<comment type="PTM">
    <text evidence="1">Methylated by PrmC. Methylation increases the termination efficiency of RF1.</text>
</comment>
<comment type="similarity">
    <text evidence="1">Belongs to the prokaryotic/mitochondrial release factor family.</text>
</comment>
<dbReference type="EMBL" id="CP000140">
    <property type="protein sequence ID" value="ABR43833.1"/>
    <property type="molecule type" value="Genomic_DNA"/>
</dbReference>
<dbReference type="RefSeq" id="WP_005854384.1">
    <property type="nucleotide sequence ID" value="NC_009615.1"/>
</dbReference>
<dbReference type="SMR" id="A6LDR9"/>
<dbReference type="STRING" id="435591.BDI_2102"/>
<dbReference type="PaxDb" id="435591-BDI_2102"/>
<dbReference type="KEGG" id="pdi:BDI_2102"/>
<dbReference type="eggNOG" id="COG0216">
    <property type="taxonomic scope" value="Bacteria"/>
</dbReference>
<dbReference type="HOGENOM" id="CLU_036856_0_1_10"/>
<dbReference type="BioCyc" id="PDIS435591:G1G5A-2157-MONOMER"/>
<dbReference type="Proteomes" id="UP000000566">
    <property type="component" value="Chromosome"/>
</dbReference>
<dbReference type="GO" id="GO:0005737">
    <property type="term" value="C:cytoplasm"/>
    <property type="evidence" value="ECO:0007669"/>
    <property type="project" value="UniProtKB-SubCell"/>
</dbReference>
<dbReference type="GO" id="GO:0016149">
    <property type="term" value="F:translation release factor activity, codon specific"/>
    <property type="evidence" value="ECO:0007669"/>
    <property type="project" value="UniProtKB-UniRule"/>
</dbReference>
<dbReference type="FunFam" id="3.30.70.1660:FF:000002">
    <property type="entry name" value="Peptide chain release factor 1"/>
    <property type="match status" value="1"/>
</dbReference>
<dbReference type="FunFam" id="3.30.70.1660:FF:000010">
    <property type="entry name" value="Peptide chain release factor 1"/>
    <property type="match status" value="1"/>
</dbReference>
<dbReference type="FunFam" id="3.30.160.20:FF:000040">
    <property type="entry name" value="Peptide chain release factor 2"/>
    <property type="match status" value="1"/>
</dbReference>
<dbReference type="Gene3D" id="3.30.160.20">
    <property type="match status" value="1"/>
</dbReference>
<dbReference type="Gene3D" id="3.30.70.1660">
    <property type="match status" value="2"/>
</dbReference>
<dbReference type="Gene3D" id="6.10.140.1950">
    <property type="match status" value="1"/>
</dbReference>
<dbReference type="HAMAP" id="MF_00093">
    <property type="entry name" value="Rel_fac_1"/>
    <property type="match status" value="1"/>
</dbReference>
<dbReference type="InterPro" id="IPR005139">
    <property type="entry name" value="PCRF"/>
</dbReference>
<dbReference type="InterPro" id="IPR000352">
    <property type="entry name" value="Pep_chain_release_fac_I"/>
</dbReference>
<dbReference type="InterPro" id="IPR045853">
    <property type="entry name" value="Pep_chain_release_fac_I_sf"/>
</dbReference>
<dbReference type="InterPro" id="IPR050057">
    <property type="entry name" value="Prokaryotic/Mito_RF"/>
</dbReference>
<dbReference type="InterPro" id="IPR004373">
    <property type="entry name" value="RF-1"/>
</dbReference>
<dbReference type="NCBIfam" id="TIGR00019">
    <property type="entry name" value="prfA"/>
    <property type="match status" value="1"/>
</dbReference>
<dbReference type="NCBIfam" id="NF001859">
    <property type="entry name" value="PRK00591.1"/>
    <property type="match status" value="1"/>
</dbReference>
<dbReference type="PANTHER" id="PTHR43804">
    <property type="entry name" value="LD18447P"/>
    <property type="match status" value="1"/>
</dbReference>
<dbReference type="PANTHER" id="PTHR43804:SF7">
    <property type="entry name" value="LD18447P"/>
    <property type="match status" value="1"/>
</dbReference>
<dbReference type="Pfam" id="PF03462">
    <property type="entry name" value="PCRF"/>
    <property type="match status" value="1"/>
</dbReference>
<dbReference type="Pfam" id="PF00472">
    <property type="entry name" value="RF-1"/>
    <property type="match status" value="1"/>
</dbReference>
<dbReference type="SMART" id="SM00937">
    <property type="entry name" value="PCRF"/>
    <property type="match status" value="1"/>
</dbReference>
<dbReference type="SUPFAM" id="SSF75620">
    <property type="entry name" value="Release factor"/>
    <property type="match status" value="1"/>
</dbReference>
<dbReference type="PROSITE" id="PS00745">
    <property type="entry name" value="RF_PROK_I"/>
    <property type="match status" value="1"/>
</dbReference>
<proteinExistence type="inferred from homology"/>
<accession>A6LDR9</accession>
<feature type="chain" id="PRO_1000004926" description="Peptide chain release factor 1">
    <location>
        <begin position="1"/>
        <end position="369"/>
    </location>
</feature>
<feature type="modified residue" description="N5-methylglutamine" evidence="1">
    <location>
        <position position="238"/>
    </location>
</feature>